<reference key="1">
    <citation type="journal article" date="2008" name="J. Bacteriol.">
        <title>Complete genome sequence of Leuconostoc citreum KM20.</title>
        <authorList>
            <person name="Kim J.F."/>
            <person name="Jeong H."/>
            <person name="Lee J.-S."/>
            <person name="Choi S.-H."/>
            <person name="Ha M."/>
            <person name="Hur C.-G."/>
            <person name="Kim J.-S."/>
            <person name="Lee S."/>
            <person name="Park H.-S."/>
            <person name="Park Y.-H."/>
            <person name="Oh T.K."/>
        </authorList>
    </citation>
    <scope>NUCLEOTIDE SEQUENCE [LARGE SCALE GENOMIC DNA]</scope>
    <source>
        <strain>KM20</strain>
    </source>
</reference>
<feature type="chain" id="PRO_1000088904" description="Ribosome-binding factor A">
    <location>
        <begin position="1"/>
        <end position="117"/>
    </location>
</feature>
<protein>
    <recommendedName>
        <fullName evidence="1">Ribosome-binding factor A</fullName>
    </recommendedName>
</protein>
<name>RBFA_LEUCK</name>
<organism>
    <name type="scientific">Leuconostoc citreum (strain KM20)</name>
    <dbReference type="NCBI Taxonomy" id="349519"/>
    <lineage>
        <taxon>Bacteria</taxon>
        <taxon>Bacillati</taxon>
        <taxon>Bacillota</taxon>
        <taxon>Bacilli</taxon>
        <taxon>Lactobacillales</taxon>
        <taxon>Lactobacillaceae</taxon>
        <taxon>Leuconostoc</taxon>
    </lineage>
</organism>
<evidence type="ECO:0000255" key="1">
    <source>
        <dbReference type="HAMAP-Rule" id="MF_00003"/>
    </source>
</evidence>
<dbReference type="EMBL" id="DQ489736">
    <property type="protein sequence ID" value="ACA82925.1"/>
    <property type="molecule type" value="Genomic_DNA"/>
</dbReference>
<dbReference type="RefSeq" id="WP_004900914.1">
    <property type="nucleotide sequence ID" value="NC_010471.1"/>
</dbReference>
<dbReference type="SMR" id="B1MZH3"/>
<dbReference type="STRING" id="349519.LCK_01098"/>
<dbReference type="GeneID" id="61101883"/>
<dbReference type="KEGG" id="lci:LCK_01098"/>
<dbReference type="eggNOG" id="COG0858">
    <property type="taxonomic scope" value="Bacteria"/>
</dbReference>
<dbReference type="HOGENOM" id="CLU_089475_3_0_9"/>
<dbReference type="OrthoDB" id="307788at2"/>
<dbReference type="Proteomes" id="UP000002166">
    <property type="component" value="Chromosome"/>
</dbReference>
<dbReference type="GO" id="GO:0005829">
    <property type="term" value="C:cytosol"/>
    <property type="evidence" value="ECO:0007669"/>
    <property type="project" value="TreeGrafter"/>
</dbReference>
<dbReference type="GO" id="GO:0043024">
    <property type="term" value="F:ribosomal small subunit binding"/>
    <property type="evidence" value="ECO:0007669"/>
    <property type="project" value="TreeGrafter"/>
</dbReference>
<dbReference type="GO" id="GO:0030490">
    <property type="term" value="P:maturation of SSU-rRNA"/>
    <property type="evidence" value="ECO:0007669"/>
    <property type="project" value="UniProtKB-UniRule"/>
</dbReference>
<dbReference type="Gene3D" id="3.30.300.20">
    <property type="match status" value="1"/>
</dbReference>
<dbReference type="HAMAP" id="MF_00003">
    <property type="entry name" value="RbfA"/>
    <property type="match status" value="1"/>
</dbReference>
<dbReference type="InterPro" id="IPR015946">
    <property type="entry name" value="KH_dom-like_a/b"/>
</dbReference>
<dbReference type="InterPro" id="IPR000238">
    <property type="entry name" value="RbfA"/>
</dbReference>
<dbReference type="InterPro" id="IPR023799">
    <property type="entry name" value="RbfA_dom_sf"/>
</dbReference>
<dbReference type="InterPro" id="IPR020053">
    <property type="entry name" value="Ribosome-bd_factorA_CS"/>
</dbReference>
<dbReference type="NCBIfam" id="TIGR00082">
    <property type="entry name" value="rbfA"/>
    <property type="match status" value="1"/>
</dbReference>
<dbReference type="PANTHER" id="PTHR33515">
    <property type="entry name" value="RIBOSOME-BINDING FACTOR A, CHLOROPLASTIC-RELATED"/>
    <property type="match status" value="1"/>
</dbReference>
<dbReference type="PANTHER" id="PTHR33515:SF1">
    <property type="entry name" value="RIBOSOME-BINDING FACTOR A, CHLOROPLASTIC-RELATED"/>
    <property type="match status" value="1"/>
</dbReference>
<dbReference type="Pfam" id="PF02033">
    <property type="entry name" value="RBFA"/>
    <property type="match status" value="1"/>
</dbReference>
<dbReference type="SUPFAM" id="SSF89919">
    <property type="entry name" value="Ribosome-binding factor A, RbfA"/>
    <property type="match status" value="1"/>
</dbReference>
<dbReference type="PROSITE" id="PS01319">
    <property type="entry name" value="RBFA"/>
    <property type="match status" value="1"/>
</dbReference>
<keyword id="KW-0963">Cytoplasm</keyword>
<keyword id="KW-1185">Reference proteome</keyword>
<keyword id="KW-0690">Ribosome biogenesis</keyword>
<comment type="function">
    <text evidence="1">One of several proteins that assist in the late maturation steps of the functional core of the 30S ribosomal subunit. Associates with free 30S ribosomal subunits (but not with 30S subunits that are part of 70S ribosomes or polysomes). Required for efficient processing of 16S rRNA. May interact with the 5'-terminal helix region of 16S rRNA.</text>
</comment>
<comment type="subunit">
    <text evidence="1">Monomer. Binds 30S ribosomal subunits, but not 50S ribosomal subunits or 70S ribosomes.</text>
</comment>
<comment type="subcellular location">
    <subcellularLocation>
        <location evidence="1">Cytoplasm</location>
    </subcellularLocation>
</comment>
<comment type="similarity">
    <text evidence="1">Belongs to the RbfA family.</text>
</comment>
<accession>B1MZH3</accession>
<sequence length="117" mass="13004">MANPQRAGRLAQEVQRDVTDLLLKRINDPRVQDVTVTSVELSGDLQIATIYYSILSDLASDGQKAQAGLEAASGLIRKELGARLTVYKTPELKFVRDQSVQYGNHIEDLIRKLHADN</sequence>
<gene>
    <name evidence="1" type="primary">rbfA</name>
    <name type="ordered locus">LCK_01098</name>
</gene>
<proteinExistence type="inferred from homology"/>